<name>CBRA_ECOK1</name>
<protein>
    <recommendedName>
        <fullName>Protein CbrA</fullName>
    </recommendedName>
</protein>
<dbReference type="EMBL" id="CP000468">
    <property type="protein sequence ID" value="ABJ03165.1"/>
    <property type="status" value="ALT_INIT"/>
    <property type="molecule type" value="Genomic_DNA"/>
</dbReference>
<dbReference type="RefSeq" id="WP_001350839.1">
    <property type="nucleotide sequence ID" value="NZ_CADILS010000011.1"/>
</dbReference>
<dbReference type="SMR" id="A1AHM5"/>
<dbReference type="KEGG" id="ecv:APECO1_2767"/>
<dbReference type="HOGENOM" id="CLU_024648_1_0_6"/>
<dbReference type="Proteomes" id="UP000008216">
    <property type="component" value="Chromosome"/>
</dbReference>
<dbReference type="GO" id="GO:0071949">
    <property type="term" value="F:FAD binding"/>
    <property type="evidence" value="ECO:0007669"/>
    <property type="project" value="InterPro"/>
</dbReference>
<dbReference type="FunFam" id="3.50.50.60:FF:000151">
    <property type="entry name" value="Protein CbrA"/>
    <property type="match status" value="1"/>
</dbReference>
<dbReference type="Gene3D" id="3.50.50.60">
    <property type="entry name" value="FAD/NAD(P)-binding domain"/>
    <property type="match status" value="1"/>
</dbReference>
<dbReference type="InterPro" id="IPR002938">
    <property type="entry name" value="FAD-bd"/>
</dbReference>
<dbReference type="InterPro" id="IPR036188">
    <property type="entry name" value="FAD/NAD-bd_sf"/>
</dbReference>
<dbReference type="InterPro" id="IPR050407">
    <property type="entry name" value="Geranylgeranyl_reductase"/>
</dbReference>
<dbReference type="NCBIfam" id="NF008519">
    <property type="entry name" value="PRK11445.1"/>
    <property type="match status" value="1"/>
</dbReference>
<dbReference type="PANTHER" id="PTHR42685:SF22">
    <property type="entry name" value="CONDITIONED MEDIUM FACTOR RECEPTOR 1"/>
    <property type="match status" value="1"/>
</dbReference>
<dbReference type="PANTHER" id="PTHR42685">
    <property type="entry name" value="GERANYLGERANYL DIPHOSPHATE REDUCTASE"/>
    <property type="match status" value="1"/>
</dbReference>
<dbReference type="Pfam" id="PF01494">
    <property type="entry name" value="FAD_binding_3"/>
    <property type="match status" value="1"/>
</dbReference>
<dbReference type="PRINTS" id="PR00420">
    <property type="entry name" value="RNGMNOXGNASE"/>
</dbReference>
<dbReference type="SUPFAM" id="SSF51905">
    <property type="entry name" value="FAD/NAD(P)-binding domain"/>
    <property type="match status" value="1"/>
</dbReference>
<comment type="similarity">
    <text evidence="1">Belongs to the CbrA family.</text>
</comment>
<comment type="sequence caution" evidence="1">
    <conflict type="erroneous initiation">
        <sequence resource="EMBL-CDS" id="ABJ03165"/>
    </conflict>
</comment>
<keyword id="KW-1185">Reference proteome</keyword>
<evidence type="ECO:0000305" key="1"/>
<organism>
    <name type="scientific">Escherichia coli O1:K1 / APEC</name>
    <dbReference type="NCBI Taxonomy" id="405955"/>
    <lineage>
        <taxon>Bacteria</taxon>
        <taxon>Pseudomonadati</taxon>
        <taxon>Pseudomonadota</taxon>
        <taxon>Gammaproteobacteria</taxon>
        <taxon>Enterobacterales</taxon>
        <taxon>Enterobacteriaceae</taxon>
        <taxon>Escherichia</taxon>
    </lineage>
</organism>
<proteinExistence type="inferred from homology"/>
<sequence>MEHFDVAIIGLGPAGSALARKLAGKMQVIALDKKHQHGTEGFSKPCGGLLAPDAQRSFIRDGLTLPVDVIANPQIFSVKTVDVAASLTRNYQRSYININRHAFDLWMKSLIPASVEVYHDSLCRKIWREDDKWHVIFRADGWEQHITARYLVGADGANSMVRRHLYPDHQIRKYVAIQQWFAEKHPVPFYSCIFDNAITDCYSWSISKDGYFIFGGAYPMKDGQTRFTTLKEKMSAFQFQFGKAVKSEKCTVLFPSRWQDFVCGKDNAFLIGEAAGFISASSLEGISYALDSAEILRSVLLKLPEKLNTAYWRATRKLRLKLFGKIVKSRCLTAPALRKWIMRSGVAHIPQLKDYPTRFTSPTSRM</sequence>
<gene>
    <name type="primary">cbrA</name>
    <name type="ordered locus">Ecok1_36710</name>
    <name type="ORF">APECO1_2767</name>
</gene>
<feature type="chain" id="PRO_0000320282" description="Protein CbrA">
    <location>
        <begin position="1"/>
        <end position="366"/>
    </location>
</feature>
<accession>A1AHM5</accession>
<reference key="1">
    <citation type="journal article" date="2007" name="J. Bacteriol.">
        <title>The genome sequence of avian pathogenic Escherichia coli strain O1:K1:H7 shares strong similarities with human extraintestinal pathogenic E. coli genomes.</title>
        <authorList>
            <person name="Johnson T.J."/>
            <person name="Kariyawasam S."/>
            <person name="Wannemuehler Y."/>
            <person name="Mangiamele P."/>
            <person name="Johnson S.J."/>
            <person name="Doetkott C."/>
            <person name="Skyberg J.A."/>
            <person name="Lynne A.M."/>
            <person name="Johnson J.R."/>
            <person name="Nolan L.K."/>
        </authorList>
    </citation>
    <scope>NUCLEOTIDE SEQUENCE [LARGE SCALE GENOMIC DNA]</scope>
</reference>